<name>PPK5A_PYCSU</name>
<organism>
    <name type="scientific">Pycnoscelus surinamensis</name>
    <name type="common">Surinam cockroach</name>
    <name type="synonym">Blatta surinamensis</name>
    <dbReference type="NCBI Taxonomy" id="36961"/>
    <lineage>
        <taxon>Eukaryota</taxon>
        <taxon>Metazoa</taxon>
        <taxon>Ecdysozoa</taxon>
        <taxon>Arthropoda</taxon>
        <taxon>Hexapoda</taxon>
        <taxon>Insecta</taxon>
        <taxon>Pterygota</taxon>
        <taxon>Neoptera</taxon>
        <taxon>Polyneoptera</taxon>
        <taxon>Dictyoptera</taxon>
        <taxon>Blattodea</taxon>
        <taxon>Blaberoidea</taxon>
        <taxon>Blaberidae</taxon>
        <taxon>Pycnoscelinae</taxon>
        <taxon>Pycnoscelus</taxon>
    </lineage>
</organism>
<dbReference type="GO" id="GO:0005576">
    <property type="term" value="C:extracellular region"/>
    <property type="evidence" value="ECO:0007669"/>
    <property type="project" value="UniProtKB-SubCell"/>
</dbReference>
<dbReference type="GO" id="GO:0005184">
    <property type="term" value="F:neuropeptide hormone activity"/>
    <property type="evidence" value="ECO:0007669"/>
    <property type="project" value="InterPro"/>
</dbReference>
<dbReference type="GO" id="GO:0007218">
    <property type="term" value="P:neuropeptide signaling pathway"/>
    <property type="evidence" value="ECO:0007669"/>
    <property type="project" value="UniProtKB-KW"/>
</dbReference>
<dbReference type="InterPro" id="IPR001484">
    <property type="entry name" value="Pyrokinin_CS"/>
</dbReference>
<dbReference type="PROSITE" id="PS00539">
    <property type="entry name" value="PYROKININ"/>
    <property type="match status" value="1"/>
</dbReference>
<reference key="1">
    <citation type="journal article" date="2009" name="BMC Evol. Biol.">
        <title>A proteomic approach for studying insect phylogeny: CAPA peptides of ancient insect taxa (Dictyoptera, Blattoptera) as a test case.</title>
        <authorList>
            <person name="Roth S."/>
            <person name="Fromm B."/>
            <person name="Gaede G."/>
            <person name="Predel R."/>
        </authorList>
    </citation>
    <scope>PROTEIN SEQUENCE</scope>
    <scope>AMIDATION AT LEU-17</scope>
    <source>
        <tissue>Abdominal perisympathetic organs</tissue>
    </source>
</reference>
<reference evidence="5" key="2">
    <citation type="submission" date="2005-09" db="UniProtKB">
        <authorList>
            <person name="Predel R."/>
        </authorList>
    </citation>
    <scope>PROTEIN SEQUENCE</scope>
    <scope>TISSUE SPECIFICITY</scope>
    <scope>MASS SPECTROMETRY</scope>
    <scope>AMIDATION AT LEU-17</scope>
    <source>
        <tissue>Abdominal perisympathetic organs</tissue>
    </source>
</reference>
<protein>
    <recommendedName>
        <fullName>Pyrokinin-5a</fullName>
        <shortName>Pycsu-PK-5a</shortName>
    </recommendedName>
    <alternativeName>
        <fullName>FXPRL-amide</fullName>
    </alternativeName>
    <alternativeName>
        <fullName>PycSu-Capa-PK</fullName>
    </alternativeName>
</protein>
<accession>P84667</accession>
<evidence type="ECO:0000250" key="1">
    <source>
        <dbReference type="UniProtKB" id="P84594"/>
    </source>
</evidence>
<evidence type="ECO:0000255" key="2"/>
<evidence type="ECO:0000269" key="3">
    <source>
    </source>
</evidence>
<evidence type="ECO:0000269" key="4">
    <source ref="2"/>
</evidence>
<evidence type="ECO:0000305" key="5"/>
<proteinExistence type="evidence at protein level"/>
<keyword id="KW-0027">Amidation</keyword>
<keyword id="KW-0903">Direct protein sequencing</keyword>
<keyword id="KW-0527">Neuropeptide</keyword>
<keyword id="KW-0964">Secreted</keyword>
<feature type="peptide" id="PRO_0000044350" description="Pyrokinin-5a">
    <location>
        <begin position="1"/>
        <end position="17"/>
    </location>
</feature>
<feature type="modified residue" description="Leucine amide" evidence="3 4">
    <location>
        <position position="17"/>
    </location>
</feature>
<comment type="function">
    <text evidence="1">Myoactive.</text>
</comment>
<comment type="subcellular location">
    <subcellularLocation>
        <location evidence="5">Secreted</location>
    </subcellularLocation>
</comment>
<comment type="tissue specificity">
    <text evidence="4">Expressed in abdominal perisympathetic organs and abdominal ganglia.</text>
</comment>
<comment type="mass spectrometry" mass="1764.8" method="MALDI" evidence="4">
    <text>With amidation.</text>
</comment>
<comment type="similarity">
    <text evidence="2">Belongs to the pyrokinin family.</text>
</comment>
<sequence length="17" mass="1766">GGETSGEGKGMWFGPRL</sequence>